<keyword id="KW-0067">ATP-binding</keyword>
<keyword id="KW-0143">Chaperone</keyword>
<keyword id="KW-0963">Cytoplasm</keyword>
<keyword id="KW-0547">Nucleotide-binding</keyword>
<keyword id="KW-0346">Stress response</keyword>
<reference key="1">
    <citation type="journal article" date="2006" name="BMC Genomics">
        <title>Comparative genome analysis: selection pressure on the Borrelia vls cassettes is essential for infectivity.</title>
        <authorList>
            <person name="Gloeckner G."/>
            <person name="Schulte-Spechtel U."/>
            <person name="Schilhabel M."/>
            <person name="Felder M."/>
            <person name="Suehnel J."/>
            <person name="Wilske B."/>
            <person name="Platzer M."/>
        </authorList>
    </citation>
    <scope>NUCLEOTIDE SEQUENCE [LARGE SCALE GENOMIC DNA]</scope>
    <source>
        <strain>PKo</strain>
    </source>
</reference>
<reference key="2">
    <citation type="journal article" date="2011" name="J. Bacteriol.">
        <title>Whole-genome sequences of two Borrelia afzelii and two Borrelia garinii Lyme disease agent isolates.</title>
        <authorList>
            <person name="Casjens S.R."/>
            <person name="Mongodin E.F."/>
            <person name="Qiu W.G."/>
            <person name="Dunn J.J."/>
            <person name="Luft B.J."/>
            <person name="Fraser-Liggett C.M."/>
            <person name="Schutzer S.E."/>
        </authorList>
    </citation>
    <scope>NUCLEOTIDE SEQUENCE [LARGE SCALE GENOMIC DNA]</scope>
    <source>
        <strain>PKo</strain>
    </source>
</reference>
<gene>
    <name evidence="1" type="primary">htpG</name>
    <name type="ordered locus">BAPKO_0589</name>
    <name type="ordered locus">BafPKo_0575</name>
</gene>
<dbReference type="EMBL" id="CP000395">
    <property type="protein sequence ID" value="ABH01829.1"/>
    <property type="molecule type" value="Genomic_DNA"/>
</dbReference>
<dbReference type="EMBL" id="CP002933">
    <property type="protein sequence ID" value="AEL69780.1"/>
    <property type="molecule type" value="Genomic_DNA"/>
</dbReference>
<dbReference type="RefSeq" id="WP_011601089.1">
    <property type="nucleotide sequence ID" value="NZ_CP160066.1"/>
</dbReference>
<dbReference type="SMR" id="Q0SMU9"/>
<dbReference type="STRING" id="29518.BLA32_01470"/>
<dbReference type="GeneID" id="76832095"/>
<dbReference type="KEGG" id="baf:BAPKO_0589"/>
<dbReference type="KEGG" id="bafz:BafPKo_0575"/>
<dbReference type="PATRIC" id="fig|390236.22.peg.553"/>
<dbReference type="eggNOG" id="COG0326">
    <property type="taxonomic scope" value="Bacteria"/>
</dbReference>
<dbReference type="HOGENOM" id="CLU_006684_3_0_12"/>
<dbReference type="OrthoDB" id="9802640at2"/>
<dbReference type="Proteomes" id="UP000005216">
    <property type="component" value="Chromosome"/>
</dbReference>
<dbReference type="GO" id="GO:0005737">
    <property type="term" value="C:cytoplasm"/>
    <property type="evidence" value="ECO:0007669"/>
    <property type="project" value="UniProtKB-SubCell"/>
</dbReference>
<dbReference type="GO" id="GO:0005524">
    <property type="term" value="F:ATP binding"/>
    <property type="evidence" value="ECO:0007669"/>
    <property type="project" value="UniProtKB-UniRule"/>
</dbReference>
<dbReference type="GO" id="GO:0016887">
    <property type="term" value="F:ATP hydrolysis activity"/>
    <property type="evidence" value="ECO:0007669"/>
    <property type="project" value="InterPro"/>
</dbReference>
<dbReference type="GO" id="GO:0140662">
    <property type="term" value="F:ATP-dependent protein folding chaperone"/>
    <property type="evidence" value="ECO:0007669"/>
    <property type="project" value="InterPro"/>
</dbReference>
<dbReference type="GO" id="GO:0051082">
    <property type="term" value="F:unfolded protein binding"/>
    <property type="evidence" value="ECO:0007669"/>
    <property type="project" value="UniProtKB-UniRule"/>
</dbReference>
<dbReference type="CDD" id="cd16927">
    <property type="entry name" value="HATPase_Hsp90-like"/>
    <property type="match status" value="1"/>
</dbReference>
<dbReference type="FunFam" id="3.30.230.80:FF:000002">
    <property type="entry name" value="Molecular chaperone HtpG"/>
    <property type="match status" value="1"/>
</dbReference>
<dbReference type="FunFam" id="3.30.565.10:FF:000009">
    <property type="entry name" value="Molecular chaperone HtpG"/>
    <property type="match status" value="1"/>
</dbReference>
<dbReference type="Gene3D" id="3.30.230.80">
    <property type="match status" value="1"/>
</dbReference>
<dbReference type="Gene3D" id="3.40.50.11260">
    <property type="match status" value="1"/>
</dbReference>
<dbReference type="Gene3D" id="1.20.120.790">
    <property type="entry name" value="Heat shock protein 90, C-terminal domain"/>
    <property type="match status" value="1"/>
</dbReference>
<dbReference type="Gene3D" id="3.30.565.10">
    <property type="entry name" value="Histidine kinase-like ATPase, C-terminal domain"/>
    <property type="match status" value="1"/>
</dbReference>
<dbReference type="HAMAP" id="MF_00505">
    <property type="entry name" value="HSP90"/>
    <property type="match status" value="1"/>
</dbReference>
<dbReference type="InterPro" id="IPR036890">
    <property type="entry name" value="HATPase_C_sf"/>
</dbReference>
<dbReference type="InterPro" id="IPR019805">
    <property type="entry name" value="Heat_shock_protein_90_CS"/>
</dbReference>
<dbReference type="InterPro" id="IPR037196">
    <property type="entry name" value="HSP90_C"/>
</dbReference>
<dbReference type="InterPro" id="IPR001404">
    <property type="entry name" value="Hsp90_fam"/>
</dbReference>
<dbReference type="InterPro" id="IPR020575">
    <property type="entry name" value="Hsp90_N"/>
</dbReference>
<dbReference type="InterPro" id="IPR020568">
    <property type="entry name" value="Ribosomal_Su5_D2-typ_SF"/>
</dbReference>
<dbReference type="NCBIfam" id="NF003555">
    <property type="entry name" value="PRK05218.1"/>
    <property type="match status" value="1"/>
</dbReference>
<dbReference type="PANTHER" id="PTHR11528">
    <property type="entry name" value="HEAT SHOCK PROTEIN 90 FAMILY MEMBER"/>
    <property type="match status" value="1"/>
</dbReference>
<dbReference type="Pfam" id="PF13589">
    <property type="entry name" value="HATPase_c_3"/>
    <property type="match status" value="1"/>
</dbReference>
<dbReference type="Pfam" id="PF00183">
    <property type="entry name" value="HSP90"/>
    <property type="match status" value="1"/>
</dbReference>
<dbReference type="PIRSF" id="PIRSF002583">
    <property type="entry name" value="Hsp90"/>
    <property type="match status" value="1"/>
</dbReference>
<dbReference type="PRINTS" id="PR00775">
    <property type="entry name" value="HEATSHOCK90"/>
</dbReference>
<dbReference type="SMART" id="SM00387">
    <property type="entry name" value="HATPase_c"/>
    <property type="match status" value="1"/>
</dbReference>
<dbReference type="SUPFAM" id="SSF55874">
    <property type="entry name" value="ATPase domain of HSP90 chaperone/DNA topoisomerase II/histidine kinase"/>
    <property type="match status" value="1"/>
</dbReference>
<dbReference type="SUPFAM" id="SSF110942">
    <property type="entry name" value="HSP90 C-terminal domain"/>
    <property type="match status" value="1"/>
</dbReference>
<dbReference type="SUPFAM" id="SSF54211">
    <property type="entry name" value="Ribosomal protein S5 domain 2-like"/>
    <property type="match status" value="1"/>
</dbReference>
<dbReference type="PROSITE" id="PS00298">
    <property type="entry name" value="HSP90"/>
    <property type="match status" value="1"/>
</dbReference>
<feature type="chain" id="PRO_1000014897" description="Chaperone protein HtpG">
    <location>
        <begin position="1"/>
        <end position="616"/>
    </location>
</feature>
<feature type="region of interest" description="A; substrate-binding" evidence="1">
    <location>
        <begin position="1"/>
        <end position="333"/>
    </location>
</feature>
<feature type="region of interest" description="B" evidence="1">
    <location>
        <begin position="334"/>
        <end position="542"/>
    </location>
</feature>
<feature type="region of interest" description="C" evidence="1">
    <location>
        <begin position="543"/>
        <end position="616"/>
    </location>
</feature>
<protein>
    <recommendedName>
        <fullName evidence="1">Chaperone protein HtpG</fullName>
    </recommendedName>
    <alternativeName>
        <fullName evidence="1">Heat shock protein HtpG</fullName>
    </alternativeName>
    <alternativeName>
        <fullName evidence="1">High temperature protein G</fullName>
    </alternativeName>
</protein>
<name>HTPG_BORAP</name>
<evidence type="ECO:0000255" key="1">
    <source>
        <dbReference type="HAMAP-Rule" id="MF_00505"/>
    </source>
</evidence>
<organism>
    <name type="scientific">Borreliella afzelii (strain PKo)</name>
    <name type="common">Borrelia afzelii</name>
    <dbReference type="NCBI Taxonomy" id="390236"/>
    <lineage>
        <taxon>Bacteria</taxon>
        <taxon>Pseudomonadati</taxon>
        <taxon>Spirochaetota</taxon>
        <taxon>Spirochaetia</taxon>
        <taxon>Spirochaetales</taxon>
        <taxon>Borreliaceae</taxon>
        <taxon>Borreliella</taxon>
    </lineage>
</organism>
<comment type="function">
    <text evidence="1">Molecular chaperone. Has ATPase activity.</text>
</comment>
<comment type="subunit">
    <text evidence="1">Homodimer.</text>
</comment>
<comment type="subcellular location">
    <subcellularLocation>
        <location evidence="1">Cytoplasm</location>
    </subcellularLocation>
</comment>
<comment type="similarity">
    <text evidence="1">Belongs to the heat shock protein 90 family.</text>
</comment>
<sequence length="616" mass="71404">MKKQFDTEVNDLLYLIIHSLYSHKEIFLRELISNASDAIDKLKFLSLTNEKFKNIALEPKIEITFDDKSILIKDNGIGMNEQELTNHLGVIAKSGTKEFINNLKQDEKKSANLIGQFGVGFYSAFIVSEKVEVTSKKALESDAYIWSSDGKTGYEIEKAKKEDPGTEIKLYLNKEGLEYANKWKIQEIVKKYSNHINYPIYIKYNEPIMKDGKQEGIEEKEEKLNETTALWTKNKSEIKTEEYNEFYKNTTFDYENPLMYIHTKAEGNLEYTNLFYIPSKAPYDLYYPNTKPGVKLFINRIFITDSEGSLLPNYLRFIKGIIDCQDLPLNVSREILQQNKILSKIKSSSVKKILSELEKLSKKNPEKFSEFSKEFGRCIKEGVYSDFENREKLISLIRFKSSSVDGFVSFKEYKERMNEGQKSIYYITGGKENILKENPIVTAYKEKGFEILIMDDELDEAILNLIPEYEGLKLKAINKNETSNELKDENFKKIEEEFKDTLTRVKEILKDQIKEVNLSATLIKEPSAIIVDSNDPTYQMQKIMLSMGQEVKEIKPILELNPNNKIVQNLKNLEPEKLEKISILLFEEALLTSGMPSKNPRKFINIINEFLEKDLL</sequence>
<accession>Q0SMU9</accession>
<accession>G0IQB0</accession>
<proteinExistence type="inferred from homology"/>